<reference key="1">
    <citation type="journal article" date="2010" name="PLoS ONE">
        <title>The complete multipartite genome sequence of Cupriavidus necator JMP134, a versatile pollutant degrader.</title>
        <authorList>
            <person name="Lykidis A."/>
            <person name="Perez-Pantoja D."/>
            <person name="Ledger T."/>
            <person name="Mavromatis K."/>
            <person name="Anderson I.J."/>
            <person name="Ivanova N.N."/>
            <person name="Hooper S.D."/>
            <person name="Lapidus A."/>
            <person name="Lucas S."/>
            <person name="Gonzalez B."/>
            <person name="Kyrpides N.C."/>
        </authorList>
    </citation>
    <scope>NUCLEOTIDE SEQUENCE [LARGE SCALE GENOMIC DNA]</scope>
    <source>
        <strain>JMP134 / LMG 1197</strain>
    </source>
</reference>
<proteinExistence type="inferred from homology"/>
<gene>
    <name evidence="1" type="primary">ugpC</name>
    <name type="ordered locus">Reut_A2049</name>
</gene>
<feature type="chain" id="PRO_0000289759" description="sn-glycerol-3-phosphate import ATP-binding protein UgpC">
    <location>
        <begin position="1"/>
        <end position="369"/>
    </location>
</feature>
<feature type="domain" description="ABC transporter" evidence="1">
    <location>
        <begin position="4"/>
        <end position="235"/>
    </location>
</feature>
<feature type="binding site" evidence="1">
    <location>
        <begin position="37"/>
        <end position="44"/>
    </location>
    <ligand>
        <name>ATP</name>
        <dbReference type="ChEBI" id="CHEBI:30616"/>
    </ligand>
</feature>
<organism>
    <name type="scientific">Cupriavidus pinatubonensis (strain JMP 134 / LMG 1197)</name>
    <name type="common">Cupriavidus necator (strain JMP 134)</name>
    <dbReference type="NCBI Taxonomy" id="264198"/>
    <lineage>
        <taxon>Bacteria</taxon>
        <taxon>Pseudomonadati</taxon>
        <taxon>Pseudomonadota</taxon>
        <taxon>Betaproteobacteria</taxon>
        <taxon>Burkholderiales</taxon>
        <taxon>Burkholderiaceae</taxon>
        <taxon>Cupriavidus</taxon>
    </lineage>
</organism>
<comment type="function">
    <text evidence="1">Part of the ABC transporter complex UgpBAEC involved in sn-glycerol-3-phosphate (G3P) import. Responsible for energy coupling to the transport system.</text>
</comment>
<comment type="catalytic activity">
    <reaction evidence="1">
        <text>sn-glycerol 3-phosphate(out) + ATP + H2O = sn-glycerol 3-phosphate(in) + ADP + phosphate + H(+)</text>
        <dbReference type="Rhea" id="RHEA:21668"/>
        <dbReference type="ChEBI" id="CHEBI:15377"/>
        <dbReference type="ChEBI" id="CHEBI:15378"/>
        <dbReference type="ChEBI" id="CHEBI:30616"/>
        <dbReference type="ChEBI" id="CHEBI:43474"/>
        <dbReference type="ChEBI" id="CHEBI:57597"/>
        <dbReference type="ChEBI" id="CHEBI:456216"/>
        <dbReference type="EC" id="7.6.2.10"/>
    </reaction>
</comment>
<comment type="subunit">
    <text evidence="1">The complex is composed of two ATP-binding proteins (UgpC), two transmembrane proteins (UgpA and UgpE) and a solute-binding protein (UgpB).</text>
</comment>
<comment type="subcellular location">
    <subcellularLocation>
        <location evidence="1">Cell inner membrane</location>
        <topology evidence="1">Peripheral membrane protein</topology>
    </subcellularLocation>
</comment>
<comment type="similarity">
    <text evidence="1">Belongs to the ABC transporter superfamily. sn-glycerol-3-phosphate importer (TC 3.A.1.1.3) family.</text>
</comment>
<dbReference type="EC" id="7.6.2.10" evidence="1"/>
<dbReference type="EMBL" id="CP000090">
    <property type="protein sequence ID" value="AAZ61413.1"/>
    <property type="molecule type" value="Genomic_DNA"/>
</dbReference>
<dbReference type="SMR" id="Q46ZM0"/>
<dbReference type="STRING" id="264198.Reut_A2049"/>
<dbReference type="KEGG" id="reu:Reut_A2049"/>
<dbReference type="eggNOG" id="COG3842">
    <property type="taxonomic scope" value="Bacteria"/>
</dbReference>
<dbReference type="HOGENOM" id="CLU_000604_1_1_4"/>
<dbReference type="OrthoDB" id="5298774at2"/>
<dbReference type="GO" id="GO:0055052">
    <property type="term" value="C:ATP-binding cassette (ABC) transporter complex, substrate-binding subunit-containing"/>
    <property type="evidence" value="ECO:0007669"/>
    <property type="project" value="TreeGrafter"/>
</dbReference>
<dbReference type="GO" id="GO:0015430">
    <property type="term" value="F:ABC-type glycerol-3-phosphate transporter activity"/>
    <property type="evidence" value="ECO:0007669"/>
    <property type="project" value="UniProtKB-EC"/>
</dbReference>
<dbReference type="GO" id="GO:0005524">
    <property type="term" value="F:ATP binding"/>
    <property type="evidence" value="ECO:0007669"/>
    <property type="project" value="UniProtKB-KW"/>
</dbReference>
<dbReference type="GO" id="GO:0016887">
    <property type="term" value="F:ATP hydrolysis activity"/>
    <property type="evidence" value="ECO:0007669"/>
    <property type="project" value="InterPro"/>
</dbReference>
<dbReference type="GO" id="GO:0008643">
    <property type="term" value="P:carbohydrate transport"/>
    <property type="evidence" value="ECO:0007669"/>
    <property type="project" value="InterPro"/>
</dbReference>
<dbReference type="GO" id="GO:0001407">
    <property type="term" value="P:glycerophosphodiester transmembrane transport"/>
    <property type="evidence" value="ECO:0007669"/>
    <property type="project" value="TreeGrafter"/>
</dbReference>
<dbReference type="CDD" id="cd03301">
    <property type="entry name" value="ABC_MalK_N"/>
    <property type="match status" value="1"/>
</dbReference>
<dbReference type="FunFam" id="3.40.50.300:FF:000042">
    <property type="entry name" value="Maltose/maltodextrin ABC transporter, ATP-binding protein"/>
    <property type="match status" value="1"/>
</dbReference>
<dbReference type="Gene3D" id="2.40.50.100">
    <property type="match status" value="1"/>
</dbReference>
<dbReference type="Gene3D" id="2.40.50.140">
    <property type="entry name" value="Nucleic acid-binding proteins"/>
    <property type="match status" value="1"/>
</dbReference>
<dbReference type="Gene3D" id="3.40.50.300">
    <property type="entry name" value="P-loop containing nucleotide triphosphate hydrolases"/>
    <property type="match status" value="1"/>
</dbReference>
<dbReference type="InterPro" id="IPR003593">
    <property type="entry name" value="AAA+_ATPase"/>
</dbReference>
<dbReference type="InterPro" id="IPR003439">
    <property type="entry name" value="ABC_transporter-like_ATP-bd"/>
</dbReference>
<dbReference type="InterPro" id="IPR017871">
    <property type="entry name" value="ABC_transporter-like_CS"/>
</dbReference>
<dbReference type="InterPro" id="IPR015855">
    <property type="entry name" value="ABC_transpr_MalK-like"/>
</dbReference>
<dbReference type="InterPro" id="IPR047641">
    <property type="entry name" value="ABC_transpr_MalK/UgpC-like"/>
</dbReference>
<dbReference type="InterPro" id="IPR008995">
    <property type="entry name" value="Mo/tungstate-bd_C_term_dom"/>
</dbReference>
<dbReference type="InterPro" id="IPR012340">
    <property type="entry name" value="NA-bd_OB-fold"/>
</dbReference>
<dbReference type="InterPro" id="IPR027417">
    <property type="entry name" value="P-loop_NTPase"/>
</dbReference>
<dbReference type="InterPro" id="IPR013611">
    <property type="entry name" value="Transp-assoc_OB_typ2"/>
</dbReference>
<dbReference type="NCBIfam" id="NF008653">
    <property type="entry name" value="PRK11650.1"/>
    <property type="match status" value="1"/>
</dbReference>
<dbReference type="PANTHER" id="PTHR43875">
    <property type="entry name" value="MALTODEXTRIN IMPORT ATP-BINDING PROTEIN MSMX"/>
    <property type="match status" value="1"/>
</dbReference>
<dbReference type="PANTHER" id="PTHR43875:SF12">
    <property type="entry name" value="SN-GLYCEROL-3-PHOSPHATE IMPORT ATP-BINDING PROTEIN UGPC"/>
    <property type="match status" value="1"/>
</dbReference>
<dbReference type="Pfam" id="PF00005">
    <property type="entry name" value="ABC_tran"/>
    <property type="match status" value="1"/>
</dbReference>
<dbReference type="Pfam" id="PF08402">
    <property type="entry name" value="TOBE_2"/>
    <property type="match status" value="1"/>
</dbReference>
<dbReference type="SMART" id="SM00382">
    <property type="entry name" value="AAA"/>
    <property type="match status" value="1"/>
</dbReference>
<dbReference type="SUPFAM" id="SSF50331">
    <property type="entry name" value="MOP-like"/>
    <property type="match status" value="1"/>
</dbReference>
<dbReference type="SUPFAM" id="SSF52540">
    <property type="entry name" value="P-loop containing nucleoside triphosphate hydrolases"/>
    <property type="match status" value="1"/>
</dbReference>
<dbReference type="PROSITE" id="PS00211">
    <property type="entry name" value="ABC_TRANSPORTER_1"/>
    <property type="match status" value="1"/>
</dbReference>
<dbReference type="PROSITE" id="PS50893">
    <property type="entry name" value="ABC_TRANSPORTER_2"/>
    <property type="match status" value="1"/>
</dbReference>
<dbReference type="PROSITE" id="PS51315">
    <property type="entry name" value="UGPC"/>
    <property type="match status" value="1"/>
</dbReference>
<evidence type="ECO:0000255" key="1">
    <source>
        <dbReference type="HAMAP-Rule" id="MF_01727"/>
    </source>
</evidence>
<sequence>MAKLSLRNVQKTYAGNVKVVHGIDMEIADGEFIVIVGPSGCGKSTLLRMVAGLETITGGDIHIGDRVVNNLEPAERDIAMVFQNYALYPHMSVYDNMAYGLKIRGMAKAEIEQRVKHAAGILELAPLLDRKPRQLSGGQRQRVAMGRAIVREPSVFLFDEPLSNLDAKLRVQMRLELKELHRRLGTTSLYVTHDQVEAMTLADRMMVLNGGRVEQIGTPLEVYTRPASTFVAGFIGSPPMNLVPVARNGGMAGAGGVAQMRVLGKEGGASDATLGHLPMGLHLPAEALLGLRPEHIEPCAAHDAIAEVDVRVVEALGADSFAYGSLGGQPIVVRLDSHARVRAGDKLPVTSSPDHLHFFDAQSGKRIEA</sequence>
<keyword id="KW-0067">ATP-binding</keyword>
<keyword id="KW-0997">Cell inner membrane</keyword>
<keyword id="KW-1003">Cell membrane</keyword>
<keyword id="KW-0472">Membrane</keyword>
<keyword id="KW-0547">Nucleotide-binding</keyword>
<keyword id="KW-0762">Sugar transport</keyword>
<keyword id="KW-1278">Translocase</keyword>
<keyword id="KW-0813">Transport</keyword>
<protein>
    <recommendedName>
        <fullName evidence="1">sn-glycerol-3-phosphate import ATP-binding protein UgpC</fullName>
        <ecNumber evidence="1">7.6.2.10</ecNumber>
    </recommendedName>
</protein>
<accession>Q46ZM0</accession>
<name>UGPC_CUPPJ</name>